<organism>
    <name type="scientific">Xanthomonas campestris pv. campestris (strain ATCC 33913 / DSM 3586 / NCPPB 528 / LMG 568 / P 25)</name>
    <dbReference type="NCBI Taxonomy" id="190485"/>
    <lineage>
        <taxon>Bacteria</taxon>
        <taxon>Pseudomonadati</taxon>
        <taxon>Pseudomonadota</taxon>
        <taxon>Gammaproteobacteria</taxon>
        <taxon>Lysobacterales</taxon>
        <taxon>Lysobacteraceae</taxon>
        <taxon>Xanthomonas</taxon>
    </lineage>
</organism>
<feature type="chain" id="PRO_0000091439" description="Elongation factor Tu-A">
    <location>
        <begin position="1"/>
        <end position="396"/>
    </location>
</feature>
<feature type="domain" description="tr-type G">
    <location>
        <begin position="10"/>
        <end position="206"/>
    </location>
</feature>
<feature type="region of interest" description="G1" evidence="1">
    <location>
        <begin position="19"/>
        <end position="26"/>
    </location>
</feature>
<feature type="region of interest" description="G2" evidence="1">
    <location>
        <begin position="60"/>
        <end position="64"/>
    </location>
</feature>
<feature type="region of interest" description="G3" evidence="1">
    <location>
        <begin position="81"/>
        <end position="84"/>
    </location>
</feature>
<feature type="region of interest" description="G4" evidence="1">
    <location>
        <begin position="136"/>
        <end position="139"/>
    </location>
</feature>
<feature type="region of interest" description="G5" evidence="1">
    <location>
        <begin position="174"/>
        <end position="176"/>
    </location>
</feature>
<feature type="binding site" evidence="2">
    <location>
        <begin position="19"/>
        <end position="26"/>
    </location>
    <ligand>
        <name>GTP</name>
        <dbReference type="ChEBI" id="CHEBI:37565"/>
    </ligand>
</feature>
<feature type="binding site" evidence="2">
    <location>
        <position position="26"/>
    </location>
    <ligand>
        <name>Mg(2+)</name>
        <dbReference type="ChEBI" id="CHEBI:18420"/>
    </ligand>
</feature>
<feature type="binding site" evidence="2">
    <location>
        <begin position="81"/>
        <end position="85"/>
    </location>
    <ligand>
        <name>GTP</name>
        <dbReference type="ChEBI" id="CHEBI:37565"/>
    </ligand>
</feature>
<feature type="binding site" evidence="2">
    <location>
        <begin position="136"/>
        <end position="139"/>
    </location>
    <ligand>
        <name>GTP</name>
        <dbReference type="ChEBI" id="CHEBI:37565"/>
    </ligand>
</feature>
<evidence type="ECO:0000250" key="1"/>
<evidence type="ECO:0000255" key="2">
    <source>
        <dbReference type="HAMAP-Rule" id="MF_00118"/>
    </source>
</evidence>
<proteinExistence type="inferred from homology"/>
<sequence length="396" mass="43185">MARAKFLREKLHVNVGTIGHVDHGKTTLTAALTKIGAERFGGEFKAYDAIDAAPEEKARGITISTAHVEYESAVRHYAHVDCPGHADYVKNMITGAAQMDGAILVCSAADGPMPQTREHILLSRQVGVPHIVVFLNKADMVDDAELLELVEMEVRELLSKYDFPGDDTPIIHGSARLALEGDQSDIGVPAILKLVEALDTFIPDPTRDVDRPFLMPVEDVFSISGRGTVVTGRIERGIIKVGDEIEIVGIRDTQKTTVTGVEMFRKLLDQGQAGDNAGLLLRGTKRDDVERGQVLCKPGSIKPHTEFEAEVYVLSKDEGGRHTPFFKGYRPQFYFRTTDITGACQLPEGVEMVMPGDNVKMVVTLINPVAMDEGLRFAIREGGRTVGAGVVAKIIK</sequence>
<comment type="function">
    <text evidence="2">GTP hydrolase that promotes the GTP-dependent binding of aminoacyl-tRNA to the A-site of ribosomes during protein biosynthesis.</text>
</comment>
<comment type="catalytic activity">
    <reaction evidence="2">
        <text>GTP + H2O = GDP + phosphate + H(+)</text>
        <dbReference type="Rhea" id="RHEA:19669"/>
        <dbReference type="ChEBI" id="CHEBI:15377"/>
        <dbReference type="ChEBI" id="CHEBI:15378"/>
        <dbReference type="ChEBI" id="CHEBI:37565"/>
        <dbReference type="ChEBI" id="CHEBI:43474"/>
        <dbReference type="ChEBI" id="CHEBI:58189"/>
        <dbReference type="EC" id="3.6.5.3"/>
    </reaction>
    <physiologicalReaction direction="left-to-right" evidence="2">
        <dbReference type="Rhea" id="RHEA:19670"/>
    </physiologicalReaction>
</comment>
<comment type="subunit">
    <text evidence="2">Monomer.</text>
</comment>
<comment type="subcellular location">
    <subcellularLocation>
        <location evidence="2">Cytoplasm</location>
    </subcellularLocation>
</comment>
<comment type="similarity">
    <text evidence="2">Belongs to the TRAFAC class translation factor GTPase superfamily. Classic translation factor GTPase family. EF-Tu/EF-1A subfamily.</text>
</comment>
<dbReference type="EC" id="3.6.5.3" evidence="2"/>
<dbReference type="EMBL" id="AE008922">
    <property type="protein sequence ID" value="AAM40191.1"/>
    <property type="molecule type" value="Genomic_DNA"/>
</dbReference>
<dbReference type="RefSeq" id="NP_636267.1">
    <property type="nucleotide sequence ID" value="NC_003902.1"/>
</dbReference>
<dbReference type="SMR" id="Q8PC59"/>
<dbReference type="STRING" id="190485.XCC0880"/>
<dbReference type="EnsemblBacteria" id="AAM40191">
    <property type="protein sequence ID" value="AAM40191"/>
    <property type="gene ID" value="XCC0880"/>
</dbReference>
<dbReference type="KEGG" id="xcc:XCC0880"/>
<dbReference type="PATRIC" id="fig|190485.4.peg.952"/>
<dbReference type="eggNOG" id="COG0050">
    <property type="taxonomic scope" value="Bacteria"/>
</dbReference>
<dbReference type="HOGENOM" id="CLU_007265_0_0_6"/>
<dbReference type="OrthoDB" id="9803139at2"/>
<dbReference type="Proteomes" id="UP000001010">
    <property type="component" value="Chromosome"/>
</dbReference>
<dbReference type="GO" id="GO:0005737">
    <property type="term" value="C:cytoplasm"/>
    <property type="evidence" value="ECO:0007669"/>
    <property type="project" value="UniProtKB-SubCell"/>
</dbReference>
<dbReference type="GO" id="GO:0005525">
    <property type="term" value="F:GTP binding"/>
    <property type="evidence" value="ECO:0007669"/>
    <property type="project" value="UniProtKB-UniRule"/>
</dbReference>
<dbReference type="GO" id="GO:0003924">
    <property type="term" value="F:GTPase activity"/>
    <property type="evidence" value="ECO:0007669"/>
    <property type="project" value="InterPro"/>
</dbReference>
<dbReference type="GO" id="GO:0097216">
    <property type="term" value="F:guanosine tetraphosphate binding"/>
    <property type="evidence" value="ECO:0007669"/>
    <property type="project" value="UniProtKB-ARBA"/>
</dbReference>
<dbReference type="GO" id="GO:0003746">
    <property type="term" value="F:translation elongation factor activity"/>
    <property type="evidence" value="ECO:0000318"/>
    <property type="project" value="GO_Central"/>
</dbReference>
<dbReference type="GO" id="GO:0006414">
    <property type="term" value="P:translational elongation"/>
    <property type="evidence" value="ECO:0000318"/>
    <property type="project" value="GO_Central"/>
</dbReference>
<dbReference type="CDD" id="cd01884">
    <property type="entry name" value="EF_Tu"/>
    <property type="match status" value="1"/>
</dbReference>
<dbReference type="CDD" id="cd03697">
    <property type="entry name" value="EFTU_II"/>
    <property type="match status" value="1"/>
</dbReference>
<dbReference type="CDD" id="cd03707">
    <property type="entry name" value="EFTU_III"/>
    <property type="match status" value="1"/>
</dbReference>
<dbReference type="FunFam" id="2.40.30.10:FF:000001">
    <property type="entry name" value="Elongation factor Tu"/>
    <property type="match status" value="1"/>
</dbReference>
<dbReference type="FunFam" id="3.40.50.300:FF:000003">
    <property type="entry name" value="Elongation factor Tu"/>
    <property type="match status" value="1"/>
</dbReference>
<dbReference type="Gene3D" id="3.40.50.300">
    <property type="entry name" value="P-loop containing nucleotide triphosphate hydrolases"/>
    <property type="match status" value="1"/>
</dbReference>
<dbReference type="Gene3D" id="2.40.30.10">
    <property type="entry name" value="Translation factors"/>
    <property type="match status" value="2"/>
</dbReference>
<dbReference type="HAMAP" id="MF_00118_B">
    <property type="entry name" value="EF_Tu_B"/>
    <property type="match status" value="1"/>
</dbReference>
<dbReference type="InterPro" id="IPR041709">
    <property type="entry name" value="EF-Tu_GTP-bd"/>
</dbReference>
<dbReference type="InterPro" id="IPR050055">
    <property type="entry name" value="EF-Tu_GTPase"/>
</dbReference>
<dbReference type="InterPro" id="IPR004161">
    <property type="entry name" value="EFTu-like_2"/>
</dbReference>
<dbReference type="InterPro" id="IPR033720">
    <property type="entry name" value="EFTU_2"/>
</dbReference>
<dbReference type="InterPro" id="IPR031157">
    <property type="entry name" value="G_TR_CS"/>
</dbReference>
<dbReference type="InterPro" id="IPR027417">
    <property type="entry name" value="P-loop_NTPase"/>
</dbReference>
<dbReference type="InterPro" id="IPR005225">
    <property type="entry name" value="Small_GTP-bd"/>
</dbReference>
<dbReference type="InterPro" id="IPR000795">
    <property type="entry name" value="T_Tr_GTP-bd_dom"/>
</dbReference>
<dbReference type="InterPro" id="IPR009000">
    <property type="entry name" value="Transl_B-barrel_sf"/>
</dbReference>
<dbReference type="InterPro" id="IPR009001">
    <property type="entry name" value="Transl_elong_EF1A/Init_IF2_C"/>
</dbReference>
<dbReference type="InterPro" id="IPR004541">
    <property type="entry name" value="Transl_elong_EFTu/EF1A_bac/org"/>
</dbReference>
<dbReference type="InterPro" id="IPR004160">
    <property type="entry name" value="Transl_elong_EFTu/EF1A_C"/>
</dbReference>
<dbReference type="NCBIfam" id="TIGR00485">
    <property type="entry name" value="EF-Tu"/>
    <property type="match status" value="1"/>
</dbReference>
<dbReference type="NCBIfam" id="NF000766">
    <property type="entry name" value="PRK00049.1"/>
    <property type="match status" value="1"/>
</dbReference>
<dbReference type="NCBIfam" id="NF009372">
    <property type="entry name" value="PRK12735.1"/>
    <property type="match status" value="1"/>
</dbReference>
<dbReference type="NCBIfam" id="NF009373">
    <property type="entry name" value="PRK12736.1"/>
    <property type="match status" value="1"/>
</dbReference>
<dbReference type="NCBIfam" id="TIGR00231">
    <property type="entry name" value="small_GTP"/>
    <property type="match status" value="1"/>
</dbReference>
<dbReference type="PANTHER" id="PTHR43721:SF22">
    <property type="entry name" value="ELONGATION FACTOR TU, MITOCHONDRIAL"/>
    <property type="match status" value="1"/>
</dbReference>
<dbReference type="PANTHER" id="PTHR43721">
    <property type="entry name" value="ELONGATION FACTOR TU-RELATED"/>
    <property type="match status" value="1"/>
</dbReference>
<dbReference type="Pfam" id="PF00009">
    <property type="entry name" value="GTP_EFTU"/>
    <property type="match status" value="1"/>
</dbReference>
<dbReference type="Pfam" id="PF03144">
    <property type="entry name" value="GTP_EFTU_D2"/>
    <property type="match status" value="1"/>
</dbReference>
<dbReference type="Pfam" id="PF03143">
    <property type="entry name" value="GTP_EFTU_D3"/>
    <property type="match status" value="1"/>
</dbReference>
<dbReference type="PRINTS" id="PR00315">
    <property type="entry name" value="ELONGATNFCT"/>
</dbReference>
<dbReference type="SUPFAM" id="SSF50465">
    <property type="entry name" value="EF-Tu/eEF-1alpha/eIF2-gamma C-terminal domain"/>
    <property type="match status" value="1"/>
</dbReference>
<dbReference type="SUPFAM" id="SSF52540">
    <property type="entry name" value="P-loop containing nucleoside triphosphate hydrolases"/>
    <property type="match status" value="1"/>
</dbReference>
<dbReference type="SUPFAM" id="SSF50447">
    <property type="entry name" value="Translation proteins"/>
    <property type="match status" value="1"/>
</dbReference>
<dbReference type="PROSITE" id="PS00301">
    <property type="entry name" value="G_TR_1"/>
    <property type="match status" value="1"/>
</dbReference>
<dbReference type="PROSITE" id="PS51722">
    <property type="entry name" value="G_TR_2"/>
    <property type="match status" value="1"/>
</dbReference>
<accession>Q8PC59</accession>
<reference key="1">
    <citation type="journal article" date="2002" name="Nature">
        <title>Comparison of the genomes of two Xanthomonas pathogens with differing host specificities.</title>
        <authorList>
            <person name="da Silva A.C.R."/>
            <person name="Ferro J.A."/>
            <person name="Reinach F.C."/>
            <person name="Farah C.S."/>
            <person name="Furlan L.R."/>
            <person name="Quaggio R.B."/>
            <person name="Monteiro-Vitorello C.B."/>
            <person name="Van Sluys M.A."/>
            <person name="Almeida N.F. Jr."/>
            <person name="Alves L.M.C."/>
            <person name="do Amaral A.M."/>
            <person name="Bertolini M.C."/>
            <person name="Camargo L.E.A."/>
            <person name="Camarotte G."/>
            <person name="Cannavan F."/>
            <person name="Cardozo J."/>
            <person name="Chambergo F."/>
            <person name="Ciapina L.P."/>
            <person name="Cicarelli R.M.B."/>
            <person name="Coutinho L.L."/>
            <person name="Cursino-Santos J.R."/>
            <person name="El-Dorry H."/>
            <person name="Faria J.B."/>
            <person name="Ferreira A.J.S."/>
            <person name="Ferreira R.C.C."/>
            <person name="Ferro M.I.T."/>
            <person name="Formighieri E.F."/>
            <person name="Franco M.C."/>
            <person name="Greggio C.C."/>
            <person name="Gruber A."/>
            <person name="Katsuyama A.M."/>
            <person name="Kishi L.T."/>
            <person name="Leite R.P."/>
            <person name="Lemos E.G.M."/>
            <person name="Lemos M.V.F."/>
            <person name="Locali E.C."/>
            <person name="Machado M.A."/>
            <person name="Madeira A.M.B.N."/>
            <person name="Martinez-Rossi N.M."/>
            <person name="Martins E.C."/>
            <person name="Meidanis J."/>
            <person name="Menck C.F.M."/>
            <person name="Miyaki C.Y."/>
            <person name="Moon D.H."/>
            <person name="Moreira L.M."/>
            <person name="Novo M.T.M."/>
            <person name="Okura V.K."/>
            <person name="Oliveira M.C."/>
            <person name="Oliveira V.R."/>
            <person name="Pereira H.A."/>
            <person name="Rossi A."/>
            <person name="Sena J.A.D."/>
            <person name="Silva C."/>
            <person name="de Souza R.F."/>
            <person name="Spinola L.A.F."/>
            <person name="Takita M.A."/>
            <person name="Tamura R.E."/>
            <person name="Teixeira E.C."/>
            <person name="Tezza R.I.D."/>
            <person name="Trindade dos Santos M."/>
            <person name="Truffi D."/>
            <person name="Tsai S.M."/>
            <person name="White F.F."/>
            <person name="Setubal J.C."/>
            <person name="Kitajima J.P."/>
        </authorList>
    </citation>
    <scope>NUCLEOTIDE SEQUENCE [LARGE SCALE GENOMIC DNA]</scope>
    <source>
        <strain>ATCC 33913 / DSM 3586 / NCPPB 528 / LMG 568 / P 25</strain>
    </source>
</reference>
<name>EFTU1_XANCP</name>
<gene>
    <name evidence="2" type="primary">tufA</name>
    <name type="ordered locus">XCC0880</name>
</gene>
<keyword id="KW-0963">Cytoplasm</keyword>
<keyword id="KW-0251">Elongation factor</keyword>
<keyword id="KW-0342">GTP-binding</keyword>
<keyword id="KW-0378">Hydrolase</keyword>
<keyword id="KW-0460">Magnesium</keyword>
<keyword id="KW-0479">Metal-binding</keyword>
<keyword id="KW-0547">Nucleotide-binding</keyword>
<keyword id="KW-0648">Protein biosynthesis</keyword>
<keyword id="KW-1185">Reference proteome</keyword>
<protein>
    <recommendedName>
        <fullName evidence="2">Elongation factor Tu-A</fullName>
        <shortName evidence="2">EF-Tu-A</shortName>
        <ecNumber evidence="2">3.6.5.3</ecNumber>
    </recommendedName>
</protein>